<feature type="initiator methionine" description="Removed" evidence="1">
    <location>
        <position position="1"/>
    </location>
</feature>
<feature type="chain" id="PRO_0000186174" description="Troponin T, cardiac muscle">
    <location>
        <begin position="2"/>
        <end position="301"/>
    </location>
</feature>
<feature type="region of interest" description="Disordered" evidence="3">
    <location>
        <begin position="1"/>
        <end position="97"/>
    </location>
</feature>
<feature type="region of interest" description="Disordered" evidence="3">
    <location>
        <begin position="125"/>
        <end position="224"/>
    </location>
</feature>
<feature type="compositionally biased region" description="Acidic residues" evidence="3">
    <location>
        <begin position="1"/>
        <end position="72"/>
    </location>
</feature>
<feature type="compositionally biased region" description="Basic and acidic residues" evidence="3">
    <location>
        <begin position="125"/>
        <end position="186"/>
    </location>
</feature>
<feature type="compositionally biased region" description="Basic and acidic residues" evidence="3">
    <location>
        <begin position="206"/>
        <end position="224"/>
    </location>
</feature>
<feature type="modified residue" description="N-acetylserine" evidence="1">
    <location>
        <position position="2"/>
    </location>
</feature>
<feature type="modified residue" description="Phosphoserine; by CK2" evidence="2">
    <location>
        <position position="2"/>
    </location>
</feature>
<feature type="modified residue" description="Phosphothreonine; by PKC/PRKCA" evidence="4">
    <location>
        <position position="207"/>
    </location>
</feature>
<feature type="modified residue" description="Phosphoserine; by PKC/PRKCA" evidence="4">
    <location>
        <position position="211"/>
    </location>
</feature>
<feature type="modified residue" description="Phosphothreonine; by PKC/PRKCA and RAF1" evidence="6">
    <location>
        <position position="216"/>
    </location>
</feature>
<feature type="modified residue" description="Phosphothreonine; by PKC/PRKCA" evidence="4">
    <location>
        <position position="297"/>
    </location>
</feature>
<feature type="splice variant" id="VSP_006649" description="In isoform A2 and isoform A3B." evidence="5">
    <location>
        <begin position="18"/>
        <end position="27"/>
    </location>
</feature>
<feature type="splice variant" id="VSP_007913" description="In isoform A1." evidence="5">
    <original>EDWSEEEED</original>
    <variation>AVE</variation>
    <location>
        <begin position="18"/>
        <end position="26"/>
    </location>
</feature>
<feature type="splice variant" id="VSP_006650" description="In isoform A3B." evidence="5">
    <location>
        <begin position="204"/>
        <end position="206"/>
    </location>
</feature>
<gene>
    <name type="primary">Tnnt2</name>
</gene>
<comment type="function">
    <text>Troponin T is the tropomyosin-binding subunit of troponin, the thin filament regulatory complex which confers calcium-sensitivity to striated muscle actomyosin ATPase activity.</text>
</comment>
<comment type="alternative products">
    <event type="alternative splicing"/>
    <isoform>
        <id>P50752-1</id>
        <name>Embryonic</name>
        <name>EA</name>
        <sequence type="displayed"/>
    </isoform>
    <isoform>
        <id>P50752-4</id>
        <name>A1</name>
        <sequence type="described" ref="VSP_007913"/>
    </isoform>
    <isoform>
        <id>P50752-3</id>
        <name>A2</name>
        <sequence type="described" ref="VSP_006649"/>
    </isoform>
    <isoform>
        <id>P50752-2</id>
        <name>A3B</name>
        <sequence type="described" ref="VSP_006649 VSP_006650"/>
    </isoform>
</comment>
<comment type="PTM">
    <text evidence="4">Phosphorylation at Thr-216 by PRKCA induces significant reduction in myofilament calcium sensitivity and actomyosin ATPase activity.</text>
</comment>
<comment type="similarity">
    <text evidence="5">Belongs to the troponin T family.</text>
</comment>
<name>TNNT2_MOUSE</name>
<protein>
    <recommendedName>
        <fullName>Troponin T, cardiac muscle</fullName>
        <shortName>TnTc</shortName>
    </recommendedName>
    <alternativeName>
        <fullName>Cardiac muscle troponin T</fullName>
        <shortName>cTnT</shortName>
    </alternativeName>
</protein>
<organism>
    <name type="scientific">Mus musculus</name>
    <name type="common">Mouse</name>
    <dbReference type="NCBI Taxonomy" id="10090"/>
    <lineage>
        <taxon>Eukaryota</taxon>
        <taxon>Metazoa</taxon>
        <taxon>Chordata</taxon>
        <taxon>Craniata</taxon>
        <taxon>Vertebrata</taxon>
        <taxon>Euteleostomi</taxon>
        <taxon>Mammalia</taxon>
        <taxon>Eutheria</taxon>
        <taxon>Euarchontoglires</taxon>
        <taxon>Glires</taxon>
        <taxon>Rodentia</taxon>
        <taxon>Myomorpha</taxon>
        <taxon>Muroidea</taxon>
        <taxon>Muridae</taxon>
        <taxon>Murinae</taxon>
        <taxon>Mus</taxon>
        <taxon>Mus</taxon>
    </lineage>
</organism>
<evidence type="ECO:0000250" key="1">
    <source>
        <dbReference type="UniProtKB" id="P09741"/>
    </source>
</evidence>
<evidence type="ECO:0000250" key="2">
    <source>
        <dbReference type="UniProtKB" id="P13789"/>
    </source>
</evidence>
<evidence type="ECO:0000256" key="3">
    <source>
        <dbReference type="SAM" id="MobiDB-lite"/>
    </source>
</evidence>
<evidence type="ECO:0000269" key="4">
    <source>
    </source>
</evidence>
<evidence type="ECO:0000305" key="5"/>
<evidence type="ECO:0000305" key="6">
    <source>
    </source>
</evidence>
<proteinExistence type="evidence at protein level"/>
<keyword id="KW-0002">3D-structure</keyword>
<keyword id="KW-0007">Acetylation</keyword>
<keyword id="KW-0025">Alternative splicing</keyword>
<keyword id="KW-0514">Muscle protein</keyword>
<keyword id="KW-0597">Phosphoprotein</keyword>
<keyword id="KW-1185">Reference proteome</keyword>
<reference key="1">
    <citation type="submission" date="1996-01" db="EMBL/GenBank/DDBJ databases">
        <title>Expression of mouse cardiac troponin T isoforms: characterization of a large sample of independent cDNA clones.</title>
        <authorList>
            <person name="Jin J.-P."/>
            <person name="Wang J."/>
            <person name="Zhang J."/>
        </authorList>
    </citation>
    <scope>NUCLEOTIDE SEQUENCE (ISOFORMS A1; A2; A3B AND EMBRYONIC)</scope>
    <source>
        <tissue>Heart</tissue>
    </source>
</reference>
<reference key="2">
    <citation type="journal article" date="2003" name="J. Biol. Chem.">
        <title>Identification of a functionally critical protein kinase C phosphorylation residue of cardiac troponin T.</title>
        <authorList>
            <person name="Sumandea M.P."/>
            <person name="Pyle W.G."/>
            <person name="Kobayashi T."/>
            <person name="de Tombe P.P."/>
            <person name="Solaro R.J."/>
        </authorList>
    </citation>
    <scope>PHOSPHORYLATION AT THR-207; SER-211; THR-216 AND THR-297</scope>
</reference>
<reference key="3">
    <citation type="journal article" date="2010" name="Cell">
        <title>A tissue-specific atlas of mouse protein phosphorylation and expression.</title>
        <authorList>
            <person name="Huttlin E.L."/>
            <person name="Jedrychowski M.P."/>
            <person name="Elias J.E."/>
            <person name="Goswami T."/>
            <person name="Rad R."/>
            <person name="Beausoleil S.A."/>
            <person name="Villen J."/>
            <person name="Haas W."/>
            <person name="Sowa M.E."/>
            <person name="Gygi S.P."/>
        </authorList>
    </citation>
    <scope>IDENTIFICATION BY MASS SPECTROMETRY [LARGE SCALE ANALYSIS]</scope>
    <source>
        <tissue>Heart</tissue>
    </source>
</reference>
<accession>P50752</accession>
<accession>Q64360</accession>
<accession>Q64377</accession>
<dbReference type="EMBL" id="L47549">
    <property type="protein sequence ID" value="AAA85345.1"/>
    <property type="molecule type" value="mRNA"/>
</dbReference>
<dbReference type="EMBL" id="L47550">
    <property type="protein sequence ID" value="AAA85346.1"/>
    <property type="molecule type" value="mRNA"/>
</dbReference>
<dbReference type="EMBL" id="L47551">
    <property type="protein sequence ID" value="AAA85347.1"/>
    <property type="molecule type" value="mRNA"/>
</dbReference>
<dbReference type="EMBL" id="L47552">
    <property type="protein sequence ID" value="AAA85348.1"/>
    <property type="molecule type" value="mRNA"/>
</dbReference>
<dbReference type="EMBL" id="L47553">
    <property type="protein sequence ID" value="AAA85349.1"/>
    <property type="molecule type" value="mRNA"/>
</dbReference>
<dbReference type="EMBL" id="L47570">
    <property type="protein sequence ID" value="AAA85350.1"/>
    <property type="molecule type" value="Genomic_DNA"/>
</dbReference>
<dbReference type="EMBL" id="L47599">
    <property type="protein sequence ID" value="AAA85351.1"/>
    <property type="molecule type" value="mRNA"/>
</dbReference>
<dbReference type="EMBL" id="L47600">
    <property type="protein sequence ID" value="AAA85352.1"/>
    <property type="molecule type" value="mRNA"/>
</dbReference>
<dbReference type="CCDS" id="CCDS48376.1">
    <molecule id="P50752-4"/>
</dbReference>
<dbReference type="CCDS" id="CCDS48377.1">
    <molecule id="P50752-1"/>
</dbReference>
<dbReference type="CCDS" id="CCDS48378.1">
    <molecule id="P50752-3"/>
</dbReference>
<dbReference type="RefSeq" id="NP_001123648.1">
    <molecule id="P50752-1"/>
    <property type="nucleotide sequence ID" value="NM_001130176.1"/>
</dbReference>
<dbReference type="RefSeq" id="NP_001123650.1">
    <molecule id="P50752-4"/>
    <property type="nucleotide sequence ID" value="NM_001130178.2"/>
</dbReference>
<dbReference type="RefSeq" id="NP_001123651.4">
    <property type="nucleotide sequence ID" value="NM_001130179.2"/>
</dbReference>
<dbReference type="RefSeq" id="NP_001123652.1">
    <molecule id="P50752-3"/>
    <property type="nucleotide sequence ID" value="NM_001130180.2"/>
</dbReference>
<dbReference type="RefSeq" id="NP_001123653.4">
    <property type="nucleotide sequence ID" value="NM_001130181.2"/>
</dbReference>
<dbReference type="RefSeq" id="NP_035749.1">
    <molecule id="P50752-2"/>
    <property type="nucleotide sequence ID" value="NM_011619.3"/>
</dbReference>
<dbReference type="RefSeq" id="XP_006529456.1">
    <molecule id="P50752-1"/>
    <property type="nucleotide sequence ID" value="XM_006529393.4"/>
</dbReference>
<dbReference type="RefSeq" id="XP_006529457.1">
    <molecule id="P50752-1"/>
    <property type="nucleotide sequence ID" value="XM_006529394.4"/>
</dbReference>
<dbReference type="RefSeq" id="XP_006529458.1">
    <molecule id="P50752-3"/>
    <property type="nucleotide sequence ID" value="XM_006529395.4"/>
</dbReference>
<dbReference type="PDB" id="6KLT">
    <property type="method" value="EM"/>
    <property type="resolution" value="12.00 A"/>
    <property type="chains" value="B=212-282"/>
</dbReference>
<dbReference type="PDB" id="6KLU">
    <property type="method" value="EM"/>
    <property type="resolution" value="12.00 A"/>
    <property type="chains" value="B=212-285"/>
</dbReference>
<dbReference type="PDBsum" id="6KLT"/>
<dbReference type="PDBsum" id="6KLU"/>
<dbReference type="EMDB" id="EMD-0717"/>
<dbReference type="EMDB" id="EMD-0718"/>
<dbReference type="SMR" id="P50752"/>
<dbReference type="BioGRID" id="204268">
    <property type="interactions" value="7"/>
</dbReference>
<dbReference type="ComplexPortal" id="CPX-16">
    <property type="entry name" value="Cardiac troponin complex"/>
</dbReference>
<dbReference type="CORUM" id="P50752"/>
<dbReference type="FunCoup" id="P50752">
    <property type="interactions" value="154"/>
</dbReference>
<dbReference type="IntAct" id="P50752">
    <property type="interactions" value="3"/>
</dbReference>
<dbReference type="MINT" id="P50752"/>
<dbReference type="STRING" id="10090.ENSMUSP00000140941"/>
<dbReference type="GlyGen" id="P50752">
    <property type="glycosylation" value="1 site, 1 O-linked glycan (1 site)"/>
</dbReference>
<dbReference type="iPTMnet" id="P50752"/>
<dbReference type="PhosphoSitePlus" id="P50752"/>
<dbReference type="CPTAC" id="non-CPTAC-3675"/>
<dbReference type="PaxDb" id="10090-ENSMUSP00000107717"/>
<dbReference type="ProteomicsDB" id="259280">
    <molecule id="P50752-1"/>
</dbReference>
<dbReference type="ProteomicsDB" id="259281">
    <molecule id="P50752-4"/>
</dbReference>
<dbReference type="ProteomicsDB" id="259282">
    <molecule id="P50752-3"/>
</dbReference>
<dbReference type="ProteomicsDB" id="259283">
    <molecule id="P50752-2"/>
</dbReference>
<dbReference type="Antibodypedia" id="4204">
    <property type="antibodies" value="1245 antibodies from 44 providers"/>
</dbReference>
<dbReference type="DNASU" id="21956"/>
<dbReference type="Ensembl" id="ENSMUST00000027671.12">
    <molecule id="P50752-3"/>
    <property type="protein sequence ID" value="ENSMUSP00000027671.6"/>
    <property type="gene ID" value="ENSMUSG00000026414.15"/>
</dbReference>
<dbReference type="Ensembl" id="ENSMUST00000112087.9">
    <molecule id="P50752-1"/>
    <property type="protein sequence ID" value="ENSMUSP00000107717.3"/>
    <property type="gene ID" value="ENSMUSG00000026414.15"/>
</dbReference>
<dbReference type="Ensembl" id="ENSMUST00000178854.8">
    <molecule id="P50752-4"/>
    <property type="protein sequence ID" value="ENSMUSP00000136265.2"/>
    <property type="gene ID" value="ENSMUSG00000026414.15"/>
</dbReference>
<dbReference type="Ensembl" id="ENSMUST00000189355.7">
    <molecule id="P50752-3"/>
    <property type="protein sequence ID" value="ENSMUSP00000139919.2"/>
    <property type="gene ID" value="ENSMUSG00000026414.15"/>
</dbReference>
<dbReference type="Ensembl" id="ENSMUST00000189732.7">
    <molecule id="P50752-4"/>
    <property type="protein sequence ID" value="ENSMUSP00000139669.2"/>
    <property type="gene ID" value="ENSMUSG00000026414.15"/>
</dbReference>
<dbReference type="GeneID" id="21956"/>
<dbReference type="KEGG" id="mmu:21956"/>
<dbReference type="UCSC" id="uc007ctu.3">
    <molecule id="P50752-4"/>
    <property type="organism name" value="mouse"/>
</dbReference>
<dbReference type="UCSC" id="uc007ctw.3">
    <molecule id="P50752-3"/>
    <property type="organism name" value="mouse"/>
</dbReference>
<dbReference type="UCSC" id="uc007ctx.3">
    <molecule id="P50752-2"/>
    <property type="organism name" value="mouse"/>
</dbReference>
<dbReference type="UCSC" id="uc011wso.2">
    <molecule id="P50752-1"/>
    <property type="organism name" value="mouse"/>
</dbReference>
<dbReference type="AGR" id="MGI:104597"/>
<dbReference type="CTD" id="7139"/>
<dbReference type="MGI" id="MGI:104597">
    <property type="gene designation" value="Tnnt2"/>
</dbReference>
<dbReference type="VEuPathDB" id="HostDB:ENSMUSG00000026414"/>
<dbReference type="eggNOG" id="KOG3634">
    <property type="taxonomic scope" value="Eukaryota"/>
</dbReference>
<dbReference type="GeneTree" id="ENSGT00940000154709"/>
<dbReference type="HOGENOM" id="CLU_076377_1_0_1"/>
<dbReference type="InParanoid" id="P50752"/>
<dbReference type="OrthoDB" id="330499at2759"/>
<dbReference type="Reactome" id="R-MMU-390522">
    <property type="pathway name" value="Striated Muscle Contraction"/>
</dbReference>
<dbReference type="BioGRID-ORCS" id="21956">
    <property type="hits" value="4 hits in 78 CRISPR screens"/>
</dbReference>
<dbReference type="ChiTaRS" id="Tnnt2">
    <property type="organism name" value="mouse"/>
</dbReference>
<dbReference type="PRO" id="PR:P50752"/>
<dbReference type="Proteomes" id="UP000000589">
    <property type="component" value="Chromosome 1"/>
</dbReference>
<dbReference type="RNAct" id="P50752">
    <property type="molecule type" value="protein"/>
</dbReference>
<dbReference type="Bgee" id="ENSMUSG00000026414">
    <property type="expression patterns" value="Expressed in atrioventricular valve and 196 other cell types or tissues"/>
</dbReference>
<dbReference type="ExpressionAtlas" id="P50752">
    <property type="expression patterns" value="baseline and differential"/>
</dbReference>
<dbReference type="GO" id="GO:1990584">
    <property type="term" value="C:cardiac Troponin complex"/>
    <property type="evidence" value="ECO:0000353"/>
    <property type="project" value="ComplexPortal"/>
</dbReference>
<dbReference type="GO" id="GO:0030016">
    <property type="term" value="C:myofibril"/>
    <property type="evidence" value="ECO:0000314"/>
    <property type="project" value="MGI"/>
</dbReference>
<dbReference type="GO" id="GO:0030017">
    <property type="term" value="C:sarcomere"/>
    <property type="evidence" value="ECO:0000314"/>
    <property type="project" value="MGI"/>
</dbReference>
<dbReference type="GO" id="GO:0016528">
    <property type="term" value="C:sarcoplasm"/>
    <property type="evidence" value="ECO:0000314"/>
    <property type="project" value="MGI"/>
</dbReference>
<dbReference type="GO" id="GO:0005865">
    <property type="term" value="C:striated muscle thin filament"/>
    <property type="evidence" value="ECO:0000250"/>
    <property type="project" value="UniProtKB"/>
</dbReference>
<dbReference type="GO" id="GO:0005861">
    <property type="term" value="C:troponin complex"/>
    <property type="evidence" value="ECO:0000314"/>
    <property type="project" value="MGI"/>
</dbReference>
<dbReference type="GO" id="GO:0003779">
    <property type="term" value="F:actin binding"/>
    <property type="evidence" value="ECO:0000250"/>
    <property type="project" value="UniProtKB"/>
</dbReference>
<dbReference type="GO" id="GO:0005200">
    <property type="term" value="F:structural constituent of cytoskeleton"/>
    <property type="evidence" value="ECO:0000314"/>
    <property type="project" value="MGI"/>
</dbReference>
<dbReference type="GO" id="GO:0005523">
    <property type="term" value="F:tropomyosin binding"/>
    <property type="evidence" value="ECO:0000250"/>
    <property type="project" value="UniProtKB"/>
</dbReference>
<dbReference type="GO" id="GO:0030172">
    <property type="term" value="F:troponin C binding"/>
    <property type="evidence" value="ECO:0000250"/>
    <property type="project" value="UniProtKB"/>
</dbReference>
<dbReference type="GO" id="GO:0031013">
    <property type="term" value="F:troponin I binding"/>
    <property type="evidence" value="ECO:0000250"/>
    <property type="project" value="UniProtKB"/>
</dbReference>
<dbReference type="GO" id="GO:0055009">
    <property type="term" value="P:atrial cardiac muscle tissue morphogenesis"/>
    <property type="evidence" value="ECO:0000315"/>
    <property type="project" value="MGI"/>
</dbReference>
<dbReference type="GO" id="GO:0060048">
    <property type="term" value="P:cardiac muscle contraction"/>
    <property type="evidence" value="ECO:0000303"/>
    <property type="project" value="ComplexPortal"/>
</dbReference>
<dbReference type="GO" id="GO:0007507">
    <property type="term" value="P:heart development"/>
    <property type="evidence" value="ECO:0000315"/>
    <property type="project" value="MGI"/>
</dbReference>
<dbReference type="GO" id="GO:0006936">
    <property type="term" value="P:muscle contraction"/>
    <property type="evidence" value="ECO:0000314"/>
    <property type="project" value="MGI"/>
</dbReference>
<dbReference type="GO" id="GO:0030049">
    <property type="term" value="P:muscle filament sliding"/>
    <property type="evidence" value="ECO:0000250"/>
    <property type="project" value="UniProtKB"/>
</dbReference>
<dbReference type="GO" id="GO:0032780">
    <property type="term" value="P:negative regulation of ATP-dependent activity"/>
    <property type="evidence" value="ECO:0000250"/>
    <property type="project" value="UniProtKB"/>
</dbReference>
<dbReference type="GO" id="GO:0032781">
    <property type="term" value="P:positive regulation of ATP-dependent activity"/>
    <property type="evidence" value="ECO:0000250"/>
    <property type="project" value="UniProtKB"/>
</dbReference>
<dbReference type="GO" id="GO:0008016">
    <property type="term" value="P:regulation of heart contraction"/>
    <property type="evidence" value="ECO:0000315"/>
    <property type="project" value="MGI"/>
</dbReference>
<dbReference type="GO" id="GO:0006937">
    <property type="term" value="P:regulation of muscle contraction"/>
    <property type="evidence" value="ECO:0007669"/>
    <property type="project" value="InterPro"/>
</dbReference>
<dbReference type="GO" id="GO:0009617">
    <property type="term" value="P:response to bacterium"/>
    <property type="evidence" value="ECO:0000270"/>
    <property type="project" value="MGI"/>
</dbReference>
<dbReference type="GO" id="GO:0051592">
    <property type="term" value="P:response to calcium ion"/>
    <property type="evidence" value="ECO:0000250"/>
    <property type="project" value="UniProtKB"/>
</dbReference>
<dbReference type="GO" id="GO:0045214">
    <property type="term" value="P:sarcomere organization"/>
    <property type="evidence" value="ECO:0000315"/>
    <property type="project" value="MGI"/>
</dbReference>
<dbReference type="GO" id="GO:0055010">
    <property type="term" value="P:ventricular cardiac muscle tissue morphogenesis"/>
    <property type="evidence" value="ECO:0000315"/>
    <property type="project" value="MGI"/>
</dbReference>
<dbReference type="FunFam" id="1.20.5.350:FF:000001">
    <property type="entry name" value="Troponin T, fast skeletal muscle"/>
    <property type="match status" value="1"/>
</dbReference>
<dbReference type="Gene3D" id="1.20.5.350">
    <property type="match status" value="1"/>
</dbReference>
<dbReference type="InterPro" id="IPR027707">
    <property type="entry name" value="TNNT"/>
</dbReference>
<dbReference type="InterPro" id="IPR001978">
    <property type="entry name" value="Troponin"/>
</dbReference>
<dbReference type="InterPro" id="IPR038077">
    <property type="entry name" value="Troponin_sf"/>
</dbReference>
<dbReference type="PANTHER" id="PTHR11521">
    <property type="entry name" value="TROPONIN T"/>
    <property type="match status" value="1"/>
</dbReference>
<dbReference type="PANTHER" id="PTHR11521:SF5">
    <property type="entry name" value="TROPONIN T, CARDIAC MUSCLE"/>
    <property type="match status" value="1"/>
</dbReference>
<dbReference type="Pfam" id="PF00992">
    <property type="entry name" value="Troponin"/>
    <property type="match status" value="2"/>
</dbReference>
<dbReference type="SUPFAM" id="SSF90250">
    <property type="entry name" value="Troponin coil-coiled subunits"/>
    <property type="match status" value="1"/>
</dbReference>
<sequence length="301" mass="35825">MSDAEEVVEEYEEEQEEEDWSEEEEDEQEEAVEEEEAGGAEPEPEGEAETEEANVEEVGPDEEAKDAEEGPVEDTKPKPSRLFMPNLVPPKIPDGERVDFDDIHRKRVEKDLNELQTLIEAHFENRKKEEEELISLKDRIEKRRAERAEQQRIRNEREKERQNRLAEERARREEEENRRKAEDEARKKKALSNMMHFGGYIQKQAQTERKSGKRQTEREKKKKILAERRKALAIDHLNEDQLREKAKELWQSIHNLEAEKFDLQEKFKQQKYEINVLRNRINDNQKVSKTRGKAKVTGRWK</sequence>